<proteinExistence type="inferred from homology"/>
<gene>
    <name evidence="1" type="primary">zipA</name>
    <name type="ordered locus">Spro_3445</name>
</gene>
<comment type="function">
    <text evidence="1">Essential cell division protein that stabilizes the FtsZ protofilaments by cross-linking them and that serves as a cytoplasmic membrane anchor for the Z ring. Also required for the recruitment to the septal ring of downstream cell division proteins.</text>
</comment>
<comment type="subunit">
    <text evidence="1">Interacts with FtsZ via their C-terminal domains.</text>
</comment>
<comment type="subcellular location">
    <subcellularLocation>
        <location evidence="1">Cell inner membrane</location>
        <topology evidence="1">Single-pass type I membrane protein</topology>
    </subcellularLocation>
    <text evidence="1">Localizes to the Z ring in an FtsZ-dependent manner.</text>
</comment>
<comment type="similarity">
    <text evidence="1">Belongs to the ZipA family.</text>
</comment>
<reference key="1">
    <citation type="submission" date="2007-09" db="EMBL/GenBank/DDBJ databases">
        <title>Complete sequence of chromosome of Serratia proteamaculans 568.</title>
        <authorList>
            <consortium name="US DOE Joint Genome Institute"/>
            <person name="Copeland A."/>
            <person name="Lucas S."/>
            <person name="Lapidus A."/>
            <person name="Barry K."/>
            <person name="Glavina del Rio T."/>
            <person name="Dalin E."/>
            <person name="Tice H."/>
            <person name="Pitluck S."/>
            <person name="Chain P."/>
            <person name="Malfatti S."/>
            <person name="Shin M."/>
            <person name="Vergez L."/>
            <person name="Schmutz J."/>
            <person name="Larimer F."/>
            <person name="Land M."/>
            <person name="Hauser L."/>
            <person name="Kyrpides N."/>
            <person name="Kim E."/>
            <person name="Taghavi S."/>
            <person name="Newman L."/>
            <person name="Vangronsveld J."/>
            <person name="van der Lelie D."/>
            <person name="Richardson P."/>
        </authorList>
    </citation>
    <scope>NUCLEOTIDE SEQUENCE [LARGE SCALE GENOMIC DNA]</scope>
    <source>
        <strain>568</strain>
    </source>
</reference>
<protein>
    <recommendedName>
        <fullName evidence="1">Cell division protein ZipA</fullName>
    </recommendedName>
</protein>
<dbReference type="EMBL" id="CP000826">
    <property type="protein sequence ID" value="ABV42543.1"/>
    <property type="molecule type" value="Genomic_DNA"/>
</dbReference>
<dbReference type="SMR" id="A8GHF3"/>
<dbReference type="STRING" id="399741.Spro_3445"/>
<dbReference type="KEGG" id="spe:Spro_3445"/>
<dbReference type="eggNOG" id="COG3115">
    <property type="taxonomic scope" value="Bacteria"/>
</dbReference>
<dbReference type="HOGENOM" id="CLU_030174_1_0_6"/>
<dbReference type="OrthoDB" id="7054914at2"/>
<dbReference type="GO" id="GO:0032153">
    <property type="term" value="C:cell division site"/>
    <property type="evidence" value="ECO:0007669"/>
    <property type="project" value="UniProtKB-UniRule"/>
</dbReference>
<dbReference type="GO" id="GO:0005886">
    <property type="term" value="C:plasma membrane"/>
    <property type="evidence" value="ECO:0007669"/>
    <property type="project" value="UniProtKB-SubCell"/>
</dbReference>
<dbReference type="GO" id="GO:0000917">
    <property type="term" value="P:division septum assembly"/>
    <property type="evidence" value="ECO:0007669"/>
    <property type="project" value="TreeGrafter"/>
</dbReference>
<dbReference type="GO" id="GO:0043093">
    <property type="term" value="P:FtsZ-dependent cytokinesis"/>
    <property type="evidence" value="ECO:0007669"/>
    <property type="project" value="UniProtKB-UniRule"/>
</dbReference>
<dbReference type="CDD" id="cd00231">
    <property type="entry name" value="ZipA"/>
    <property type="match status" value="1"/>
</dbReference>
<dbReference type="FunFam" id="3.30.1400.10:FF:000001">
    <property type="entry name" value="Cell division protein ZipA"/>
    <property type="match status" value="1"/>
</dbReference>
<dbReference type="Gene3D" id="3.30.1400.10">
    <property type="entry name" value="ZipA, C-terminal FtsZ-binding domain"/>
    <property type="match status" value="1"/>
</dbReference>
<dbReference type="HAMAP" id="MF_00509">
    <property type="entry name" value="ZipA"/>
    <property type="match status" value="1"/>
</dbReference>
<dbReference type="InterPro" id="IPR011919">
    <property type="entry name" value="Cell_div_ZipA"/>
</dbReference>
<dbReference type="InterPro" id="IPR007449">
    <property type="entry name" value="ZipA_FtsZ-bd_C"/>
</dbReference>
<dbReference type="InterPro" id="IPR036765">
    <property type="entry name" value="ZipA_FtsZ-bd_C_sf"/>
</dbReference>
<dbReference type="NCBIfam" id="TIGR02205">
    <property type="entry name" value="septum_zipA"/>
    <property type="match status" value="1"/>
</dbReference>
<dbReference type="PANTHER" id="PTHR38685">
    <property type="entry name" value="CELL DIVISION PROTEIN ZIPA"/>
    <property type="match status" value="1"/>
</dbReference>
<dbReference type="PANTHER" id="PTHR38685:SF1">
    <property type="entry name" value="CELL DIVISION PROTEIN ZIPA"/>
    <property type="match status" value="1"/>
</dbReference>
<dbReference type="Pfam" id="PF04354">
    <property type="entry name" value="ZipA_C"/>
    <property type="match status" value="1"/>
</dbReference>
<dbReference type="SMART" id="SM00771">
    <property type="entry name" value="ZipA_C"/>
    <property type="match status" value="1"/>
</dbReference>
<dbReference type="SUPFAM" id="SSF64383">
    <property type="entry name" value="Cell-division protein ZipA, C-terminal domain"/>
    <property type="match status" value="1"/>
</dbReference>
<keyword id="KW-0131">Cell cycle</keyword>
<keyword id="KW-0132">Cell division</keyword>
<keyword id="KW-0997">Cell inner membrane</keyword>
<keyword id="KW-1003">Cell membrane</keyword>
<keyword id="KW-0472">Membrane</keyword>
<keyword id="KW-0812">Transmembrane</keyword>
<keyword id="KW-1133">Transmembrane helix</keyword>
<organism>
    <name type="scientific">Serratia proteamaculans (strain 568)</name>
    <dbReference type="NCBI Taxonomy" id="399741"/>
    <lineage>
        <taxon>Bacteria</taxon>
        <taxon>Pseudomonadati</taxon>
        <taxon>Pseudomonadota</taxon>
        <taxon>Gammaproteobacteria</taxon>
        <taxon>Enterobacterales</taxon>
        <taxon>Yersiniaceae</taxon>
        <taxon>Serratia</taxon>
    </lineage>
</organism>
<evidence type="ECO:0000255" key="1">
    <source>
        <dbReference type="HAMAP-Rule" id="MF_00509"/>
    </source>
</evidence>
<evidence type="ECO:0000256" key="2">
    <source>
        <dbReference type="SAM" id="MobiDB-lite"/>
    </source>
</evidence>
<accession>A8GHF3</accession>
<sequence>MMQDLRLILIVVGAIAIIALLLHGLWTSRKERSSLFRDRPAKRSKKEREQSPIDELDEGVGEVRVRSAHPEDEPSFGHFDAAREEPVVAPKPAPAAEPAPRAVQPAAHQTPPPLSQRPDYDDILLDNYAQEEDDEPQQPAPRREPRVDDLPPVAPAAEPAFHAEPAHQPQPEVKPAVAHEPQPAPAAIKPAKLKETVLVLHVTAHQGGVIGGEILLQSVLQAGFQFGEMGIFHRHISPAGSGPVLFSLANMVKPGSFDPEMMSDFSTPGVSMFMMVPSYGDANQNFKLMLQSAQRIADDVGGVVLDDERRMMTPQKLETYKARLREVLENNA</sequence>
<name>ZIPA_SERP5</name>
<feature type="chain" id="PRO_1000060870" description="Cell division protein ZipA">
    <location>
        <begin position="1"/>
        <end position="332"/>
    </location>
</feature>
<feature type="topological domain" description="Periplasmic" evidence="1">
    <location>
        <begin position="1"/>
        <end position="6"/>
    </location>
</feature>
<feature type="transmembrane region" description="Helical" evidence="1">
    <location>
        <begin position="7"/>
        <end position="27"/>
    </location>
</feature>
<feature type="topological domain" description="Cytoplasmic" evidence="1">
    <location>
        <begin position="28"/>
        <end position="332"/>
    </location>
</feature>
<feature type="region of interest" description="Disordered" evidence="2">
    <location>
        <begin position="34"/>
        <end position="184"/>
    </location>
</feature>
<feature type="compositionally biased region" description="Basic and acidic residues" evidence="2">
    <location>
        <begin position="34"/>
        <end position="51"/>
    </location>
</feature>
<feature type="compositionally biased region" description="Basic and acidic residues" evidence="2">
    <location>
        <begin position="61"/>
        <end position="72"/>
    </location>
</feature>
<feature type="compositionally biased region" description="Low complexity" evidence="2">
    <location>
        <begin position="98"/>
        <end position="107"/>
    </location>
</feature>
<feature type="compositionally biased region" description="Acidic residues" evidence="2">
    <location>
        <begin position="121"/>
        <end position="136"/>
    </location>
</feature>
<feature type="compositionally biased region" description="Low complexity" evidence="2">
    <location>
        <begin position="155"/>
        <end position="171"/>
    </location>
</feature>